<comment type="subcellular location">
    <subcellularLocation>
        <location evidence="1">Cell membrane</location>
        <topology evidence="1">Multi-pass membrane protein</topology>
    </subcellularLocation>
</comment>
<comment type="similarity">
    <text evidence="1">Belongs to the UPF0316 family.</text>
</comment>
<reference key="1">
    <citation type="journal article" date="2006" name="J. Bacteriol.">
        <title>Whole-genome sequence of Listeria welshimeri reveals common steps in genome reduction with Listeria innocua as compared to Listeria monocytogenes.</title>
        <authorList>
            <person name="Hain T."/>
            <person name="Steinweg C."/>
            <person name="Kuenne C.T."/>
            <person name="Billion A."/>
            <person name="Ghai R."/>
            <person name="Chatterjee S.S."/>
            <person name="Domann E."/>
            <person name="Kaerst U."/>
            <person name="Goesmann A."/>
            <person name="Bekel T."/>
            <person name="Bartels D."/>
            <person name="Kaiser O."/>
            <person name="Meyer F."/>
            <person name="Puehler A."/>
            <person name="Weisshaar B."/>
            <person name="Wehland J."/>
            <person name="Liang C."/>
            <person name="Dandekar T."/>
            <person name="Lampidis R."/>
            <person name="Kreft J."/>
            <person name="Goebel W."/>
            <person name="Chakraborty T."/>
        </authorList>
    </citation>
    <scope>NUCLEOTIDE SEQUENCE [LARGE SCALE GENOMIC DNA]</scope>
    <source>
        <strain>ATCC 35897 / DSM 20650 / CCUG 15529 / CIP 8149 / NCTC 11857 / SLCC 5334 / V8</strain>
    </source>
</reference>
<protein>
    <recommendedName>
        <fullName evidence="1">UPF0316 protein lwe1794</fullName>
    </recommendedName>
</protein>
<feature type="chain" id="PRO_0000294265" description="UPF0316 protein lwe1794">
    <location>
        <begin position="1"/>
        <end position="174"/>
    </location>
</feature>
<feature type="transmembrane region" description="Helical" evidence="1">
    <location>
        <begin position="4"/>
        <end position="24"/>
    </location>
</feature>
<feature type="transmembrane region" description="Helical" evidence="1">
    <location>
        <begin position="36"/>
        <end position="56"/>
    </location>
</feature>
<feature type="transmembrane region" description="Helical" evidence="1">
    <location>
        <begin position="62"/>
        <end position="82"/>
    </location>
</feature>
<dbReference type="EMBL" id="AM263198">
    <property type="protein sequence ID" value="CAK21212.1"/>
    <property type="molecule type" value="Genomic_DNA"/>
</dbReference>
<dbReference type="RefSeq" id="WP_011702571.1">
    <property type="nucleotide sequence ID" value="NC_008555.1"/>
</dbReference>
<dbReference type="SMR" id="A0AJN0"/>
<dbReference type="STRING" id="386043.lwe1794"/>
<dbReference type="GeneID" id="61189692"/>
<dbReference type="KEGG" id="lwe:lwe1794"/>
<dbReference type="eggNOG" id="COG4843">
    <property type="taxonomic scope" value="Bacteria"/>
</dbReference>
<dbReference type="HOGENOM" id="CLU_106166_1_0_9"/>
<dbReference type="OrthoDB" id="48231at2"/>
<dbReference type="Proteomes" id="UP000000779">
    <property type="component" value="Chromosome"/>
</dbReference>
<dbReference type="GO" id="GO:0005886">
    <property type="term" value="C:plasma membrane"/>
    <property type="evidence" value="ECO:0007669"/>
    <property type="project" value="UniProtKB-SubCell"/>
</dbReference>
<dbReference type="CDD" id="cd16381">
    <property type="entry name" value="YitT_C_like_1"/>
    <property type="match status" value="1"/>
</dbReference>
<dbReference type="HAMAP" id="MF_01515">
    <property type="entry name" value="UPF0316"/>
    <property type="match status" value="1"/>
</dbReference>
<dbReference type="InterPro" id="IPR019264">
    <property type="entry name" value="DUF2179"/>
</dbReference>
<dbReference type="InterPro" id="IPR044035">
    <property type="entry name" value="DUF5698"/>
</dbReference>
<dbReference type="InterPro" id="IPR022930">
    <property type="entry name" value="UPF0316"/>
</dbReference>
<dbReference type="NCBIfam" id="NF003192">
    <property type="entry name" value="PRK04164.1-3"/>
    <property type="match status" value="1"/>
</dbReference>
<dbReference type="NCBIfam" id="NF003194">
    <property type="entry name" value="PRK04164.1-5"/>
    <property type="match status" value="1"/>
</dbReference>
<dbReference type="PANTHER" id="PTHR40060">
    <property type="entry name" value="UPF0316 PROTEIN YEBE"/>
    <property type="match status" value="1"/>
</dbReference>
<dbReference type="PANTHER" id="PTHR40060:SF1">
    <property type="entry name" value="UPF0316 PROTEIN YEBE"/>
    <property type="match status" value="1"/>
</dbReference>
<dbReference type="Pfam" id="PF10035">
    <property type="entry name" value="DUF2179"/>
    <property type="match status" value="1"/>
</dbReference>
<dbReference type="Pfam" id="PF18955">
    <property type="entry name" value="DUF5698"/>
    <property type="match status" value="1"/>
</dbReference>
<name>Y1794_LISW6</name>
<accession>A0AJN0</accession>
<keyword id="KW-1003">Cell membrane</keyword>
<keyword id="KW-0472">Membrane</keyword>
<keyword id="KW-0812">Transmembrane</keyword>
<keyword id="KW-1133">Transmembrane helix</keyword>
<organism>
    <name type="scientific">Listeria welshimeri serovar 6b (strain ATCC 35897 / DSM 20650 / CCUG 15529 / CIP 8149 / NCTC 11857 / SLCC 5334 / V8)</name>
    <dbReference type="NCBI Taxonomy" id="386043"/>
    <lineage>
        <taxon>Bacteria</taxon>
        <taxon>Bacillati</taxon>
        <taxon>Bacillota</taxon>
        <taxon>Bacilli</taxon>
        <taxon>Bacillales</taxon>
        <taxon>Listeriaceae</taxon>
        <taxon>Listeria</taxon>
    </lineage>
</organism>
<proteinExistence type="inferred from homology"/>
<evidence type="ECO:0000255" key="1">
    <source>
        <dbReference type="HAMAP-Rule" id="MF_01515"/>
    </source>
</evidence>
<gene>
    <name type="ordered locus">lwe1794</name>
</gene>
<sequence length="174" mass="19711">MDNGLFIVVTIFVVNILYVTIYTVRLLLTMKGYRYLAALSSVFEMIIYVVALSLVLDNLNNIANVLAYAIGFGVGVIVGMKIEERIALGYITVNVITKEYNLDLPNQIRDLGYGVTSWIASGRDGERMMLEILTQRKNERKLYKQIIEIDNGAFIVSSEPKQIHGGFWIKQVRK</sequence>